<sequence length="195" mass="21135">MLKIGLTGGIGSGKSTVADLLSSEGFLIIDADQIAREIVEPGQPALAELVEAFGPEIIKEDGSLDRQGLAAKAFVDAEHTALLNSITHPRIAEETARRFAEAEANGTKVAIYDMPLLVDKGLDRGMDLVLVVDVNVEERVRRLVEKRGLGEKDVRRRIDSQVPDEVRLKAADVVIDNNGSLEDLKANMKNVIAEI</sequence>
<accession>P56187</accession>
<comment type="function">
    <text evidence="1">Catalyzes the phosphorylation of the 3'-hydroxyl group of dephosphocoenzyme A to form coenzyme A.</text>
</comment>
<comment type="catalytic activity">
    <reaction evidence="1">
        <text>3'-dephospho-CoA + ATP = ADP + CoA + H(+)</text>
        <dbReference type="Rhea" id="RHEA:18245"/>
        <dbReference type="ChEBI" id="CHEBI:15378"/>
        <dbReference type="ChEBI" id="CHEBI:30616"/>
        <dbReference type="ChEBI" id="CHEBI:57287"/>
        <dbReference type="ChEBI" id="CHEBI:57328"/>
        <dbReference type="ChEBI" id="CHEBI:456216"/>
        <dbReference type="EC" id="2.7.1.24"/>
    </reaction>
</comment>
<comment type="pathway">
    <text evidence="1">Cofactor biosynthesis; coenzyme A biosynthesis; CoA from (R)-pantothenate: step 5/5.</text>
</comment>
<comment type="subcellular location">
    <subcellularLocation>
        <location evidence="1">Cytoplasm</location>
    </subcellularLocation>
</comment>
<comment type="similarity">
    <text evidence="1 2">Belongs to the CoaE family.</text>
</comment>
<organism>
    <name type="scientific">Corynebacterium glutamicum</name>
    <name type="common">Brevibacterium saccharolyticum</name>
    <dbReference type="NCBI Taxonomy" id="1718"/>
    <lineage>
        <taxon>Bacteria</taxon>
        <taxon>Bacillati</taxon>
        <taxon>Actinomycetota</taxon>
        <taxon>Actinomycetes</taxon>
        <taxon>Mycobacteriales</taxon>
        <taxon>Corynebacteriaceae</taxon>
        <taxon>Corynebacterium</taxon>
    </lineage>
</organism>
<name>COAE_CORGT</name>
<geneLocation type="plasmid">
    <name>pBSBG2</name>
</geneLocation>
<proteinExistence type="inferred from homology"/>
<keyword id="KW-0067">ATP-binding</keyword>
<keyword id="KW-0173">Coenzyme A biosynthesis</keyword>
<keyword id="KW-0963">Cytoplasm</keyword>
<keyword id="KW-0418">Kinase</keyword>
<keyword id="KW-0547">Nucleotide-binding</keyword>
<keyword id="KW-0614">Plasmid</keyword>
<keyword id="KW-0808">Transferase</keyword>
<gene>
    <name evidence="1" type="primary">coaE</name>
</gene>
<reference key="1">
    <citation type="submission" date="1993-11" db="EMBL/GenBank/DDBJ databases">
        <title>Cloning and nucleotide sequence of enzyme II of Brevibacterium lactofermentum phosphotransferase system.</title>
        <authorList>
            <person name="Yoon K.-H."/>
        </authorList>
    </citation>
    <scope>NUCLEOTIDE SEQUENCE [GENOMIC DNA]</scope>
    <source>
        <strain>ATCC 13869 / DSM 1412 / NCIMB 9567 / 2256</strain>
    </source>
</reference>
<reference key="2">
    <citation type="unpublished observations" date="1997-01">
        <authorList>
            <person name="Rudd K.E."/>
        </authorList>
    </citation>
    <scope>IDENTIFICATION</scope>
</reference>
<protein>
    <recommendedName>
        <fullName evidence="1">Dephospho-CoA kinase</fullName>
        <ecNumber evidence="1">2.7.1.24</ecNumber>
    </recommendedName>
    <alternativeName>
        <fullName evidence="1">Dephosphocoenzyme A kinase</fullName>
    </alternativeName>
</protein>
<feature type="chain" id="PRO_0000172937" description="Dephospho-CoA kinase">
    <location>
        <begin position="1"/>
        <end position="195" status="greater than"/>
    </location>
</feature>
<feature type="domain" description="DPCK" evidence="1">
    <location>
        <begin position="3"/>
        <end position="195" status="greater than"/>
    </location>
</feature>
<feature type="binding site" evidence="1">
    <location>
        <begin position="11"/>
        <end position="16"/>
    </location>
    <ligand>
        <name>ATP</name>
        <dbReference type="ChEBI" id="CHEBI:30616"/>
    </ligand>
</feature>
<feature type="non-terminal residue">
    <location>
        <position position="195"/>
    </location>
</feature>
<evidence type="ECO:0000255" key="1">
    <source>
        <dbReference type="HAMAP-Rule" id="MF_00376"/>
    </source>
</evidence>
<evidence type="ECO:0000305" key="2"/>
<dbReference type="EC" id="2.7.1.24" evidence="1"/>
<dbReference type="EMBL" id="L18875">
    <property type="status" value="NOT_ANNOTATED_CDS"/>
    <property type="molecule type" value="Genomic_DNA"/>
</dbReference>
<dbReference type="SMR" id="P56187"/>
<dbReference type="UniPathway" id="UPA00241">
    <property type="reaction ID" value="UER00356"/>
</dbReference>
<dbReference type="GO" id="GO:0005737">
    <property type="term" value="C:cytoplasm"/>
    <property type="evidence" value="ECO:0007669"/>
    <property type="project" value="UniProtKB-SubCell"/>
</dbReference>
<dbReference type="GO" id="GO:0005524">
    <property type="term" value="F:ATP binding"/>
    <property type="evidence" value="ECO:0007669"/>
    <property type="project" value="UniProtKB-KW"/>
</dbReference>
<dbReference type="GO" id="GO:0004140">
    <property type="term" value="F:dephospho-CoA kinase activity"/>
    <property type="evidence" value="ECO:0007669"/>
    <property type="project" value="UniProtKB-EC"/>
</dbReference>
<dbReference type="GO" id="GO:0015937">
    <property type="term" value="P:coenzyme A biosynthetic process"/>
    <property type="evidence" value="ECO:0007669"/>
    <property type="project" value="UniProtKB-UniPathway"/>
</dbReference>
<dbReference type="CDD" id="cd02022">
    <property type="entry name" value="DPCK"/>
    <property type="match status" value="1"/>
</dbReference>
<dbReference type="Gene3D" id="3.40.50.300">
    <property type="entry name" value="P-loop containing nucleotide triphosphate hydrolases"/>
    <property type="match status" value="1"/>
</dbReference>
<dbReference type="HAMAP" id="MF_00376">
    <property type="entry name" value="Dephospho_CoA_kinase"/>
    <property type="match status" value="1"/>
</dbReference>
<dbReference type="InterPro" id="IPR001977">
    <property type="entry name" value="Depp_CoAkinase"/>
</dbReference>
<dbReference type="InterPro" id="IPR027417">
    <property type="entry name" value="P-loop_NTPase"/>
</dbReference>
<dbReference type="NCBIfam" id="TIGR00152">
    <property type="entry name" value="dephospho-CoA kinase"/>
    <property type="match status" value="1"/>
</dbReference>
<dbReference type="NCBIfam" id="NF002879">
    <property type="entry name" value="PRK03333.1"/>
    <property type="match status" value="1"/>
</dbReference>
<dbReference type="PANTHER" id="PTHR10695:SF46">
    <property type="entry name" value="BIFUNCTIONAL COENZYME A SYNTHASE-RELATED"/>
    <property type="match status" value="1"/>
</dbReference>
<dbReference type="PANTHER" id="PTHR10695">
    <property type="entry name" value="DEPHOSPHO-COA KINASE-RELATED"/>
    <property type="match status" value="1"/>
</dbReference>
<dbReference type="Pfam" id="PF01121">
    <property type="entry name" value="CoaE"/>
    <property type="match status" value="1"/>
</dbReference>
<dbReference type="SUPFAM" id="SSF52540">
    <property type="entry name" value="P-loop containing nucleoside triphosphate hydrolases"/>
    <property type="match status" value="1"/>
</dbReference>
<dbReference type="PROSITE" id="PS51219">
    <property type="entry name" value="DPCK"/>
    <property type="match status" value="1"/>
</dbReference>